<reference key="1">
    <citation type="journal article" date="2003" name="Proc. Natl. Acad. Sci. U.S.A.">
        <title>Reductive genome evolution in Buchnera aphidicola.</title>
        <authorList>
            <person name="van Ham R.C.H.J."/>
            <person name="Kamerbeek J."/>
            <person name="Palacios C."/>
            <person name="Rausell C."/>
            <person name="Abascal F."/>
            <person name="Bastolla U."/>
            <person name="Fernandez J.M."/>
            <person name="Jimenez L."/>
            <person name="Postigo M."/>
            <person name="Silva F.J."/>
            <person name="Tamames J."/>
            <person name="Viguera E."/>
            <person name="Latorre A."/>
            <person name="Valencia A."/>
            <person name="Moran F."/>
            <person name="Moya A."/>
        </authorList>
    </citation>
    <scope>NUCLEOTIDE SEQUENCE [LARGE SCALE GENOMIC DNA]</scope>
    <source>
        <strain>Bp</strain>
    </source>
</reference>
<protein>
    <recommendedName>
        <fullName evidence="1">Ion-translocating oxidoreductase complex subunit E</fullName>
        <ecNumber evidence="1">7.-.-.-</ecNumber>
    </recommendedName>
    <alternativeName>
        <fullName evidence="1">Rnf electron transport complex subunit E</fullName>
    </alternativeName>
</protein>
<name>RNFE_BUCBP</name>
<organism>
    <name type="scientific">Buchnera aphidicola subsp. Baizongia pistaciae (strain Bp)</name>
    <dbReference type="NCBI Taxonomy" id="224915"/>
    <lineage>
        <taxon>Bacteria</taxon>
        <taxon>Pseudomonadati</taxon>
        <taxon>Pseudomonadota</taxon>
        <taxon>Gammaproteobacteria</taxon>
        <taxon>Enterobacterales</taxon>
        <taxon>Erwiniaceae</taxon>
        <taxon>Buchnera</taxon>
    </lineage>
</organism>
<comment type="function">
    <text evidence="1">Part of a membrane-bound complex that couples electron transfer with translocation of ions across the membrane.</text>
</comment>
<comment type="subunit">
    <text evidence="1">The complex is composed of six subunits: RnfA, RnfB, RnfC, RnfD, RnfE and RnfG.</text>
</comment>
<comment type="subcellular location">
    <subcellularLocation>
        <location evidence="1">Cell inner membrane</location>
        <topology evidence="1">Multi-pass membrane protein</topology>
    </subcellularLocation>
</comment>
<comment type="similarity">
    <text evidence="1">Belongs to the NqrDE/RnfAE family.</text>
</comment>
<keyword id="KW-0997">Cell inner membrane</keyword>
<keyword id="KW-1003">Cell membrane</keyword>
<keyword id="KW-0249">Electron transport</keyword>
<keyword id="KW-0472">Membrane</keyword>
<keyword id="KW-1185">Reference proteome</keyword>
<keyword id="KW-1278">Translocase</keyword>
<keyword id="KW-0812">Transmembrane</keyword>
<keyword id="KW-1133">Transmembrane helix</keyword>
<keyword id="KW-0813">Transport</keyword>
<accession>Q89AW5</accession>
<proteinExistence type="inferred from homology"/>
<gene>
    <name evidence="1" type="primary">rnfE</name>
    <name type="ordered locus">bbp_113</name>
</gene>
<sequence>MSNILKIFVDGLWKKNSSLVQLLGLCPVLAITVNAINAIGLGLATTLVLICSNATISLIKNNIQKDFRIPIYIIIISSVVSSIDLVIKAYAFNLYQSLGIFIPLIITNCIVCNRADLIAVHNSVLVSILDGLSIGLGSTLTMFLLGSIREIIGHGTLFFGIEHVLGESFRFLYIEVLDKNSVFLLFAFPSGAFMILGIVLAGKNFLDEVLGIIEHKNVCVCSNKVLVYKDGNKKIESQKSL</sequence>
<feature type="chain" id="PRO_0000214268" description="Ion-translocating oxidoreductase complex subunit E">
    <location>
        <begin position="1"/>
        <end position="241"/>
    </location>
</feature>
<feature type="transmembrane region" description="Helical" evidence="1">
    <location>
        <begin position="22"/>
        <end position="42"/>
    </location>
</feature>
<feature type="transmembrane region" description="Helical" evidence="1">
    <location>
        <begin position="69"/>
        <end position="89"/>
    </location>
</feature>
<feature type="transmembrane region" description="Helical" evidence="1">
    <location>
        <begin position="91"/>
        <end position="111"/>
    </location>
</feature>
<feature type="transmembrane region" description="Helical" evidence="1">
    <location>
        <begin position="124"/>
        <end position="144"/>
    </location>
</feature>
<feature type="transmembrane region" description="Helical" evidence="1">
    <location>
        <begin position="157"/>
        <end position="177"/>
    </location>
</feature>
<feature type="transmembrane region" description="Helical" evidence="1">
    <location>
        <begin position="182"/>
        <end position="202"/>
    </location>
</feature>
<dbReference type="EC" id="7.-.-.-" evidence="1"/>
<dbReference type="EMBL" id="AE016826">
    <property type="protein sequence ID" value="AAO26847.1"/>
    <property type="molecule type" value="Genomic_DNA"/>
</dbReference>
<dbReference type="RefSeq" id="WP_011091248.1">
    <property type="nucleotide sequence ID" value="NC_004545.1"/>
</dbReference>
<dbReference type="SMR" id="Q89AW5"/>
<dbReference type="STRING" id="224915.bbp_113"/>
<dbReference type="KEGG" id="bab:bbp_113"/>
<dbReference type="eggNOG" id="COG4660">
    <property type="taxonomic scope" value="Bacteria"/>
</dbReference>
<dbReference type="HOGENOM" id="CLU_046659_1_0_6"/>
<dbReference type="OrthoDB" id="9803631at2"/>
<dbReference type="Proteomes" id="UP000000601">
    <property type="component" value="Chromosome"/>
</dbReference>
<dbReference type="GO" id="GO:0005886">
    <property type="term" value="C:plasma membrane"/>
    <property type="evidence" value="ECO:0007669"/>
    <property type="project" value="UniProtKB-SubCell"/>
</dbReference>
<dbReference type="GO" id="GO:0022900">
    <property type="term" value="P:electron transport chain"/>
    <property type="evidence" value="ECO:0007669"/>
    <property type="project" value="UniProtKB-UniRule"/>
</dbReference>
<dbReference type="HAMAP" id="MF_00478">
    <property type="entry name" value="RsxE_RnfE"/>
    <property type="match status" value="1"/>
</dbReference>
<dbReference type="InterPro" id="IPR003667">
    <property type="entry name" value="NqrDE/RnfAE"/>
</dbReference>
<dbReference type="InterPro" id="IPR010968">
    <property type="entry name" value="RnfE"/>
</dbReference>
<dbReference type="NCBIfam" id="NF009070">
    <property type="entry name" value="PRK12405.1"/>
    <property type="match status" value="1"/>
</dbReference>
<dbReference type="NCBIfam" id="TIGR01948">
    <property type="entry name" value="rnfE"/>
    <property type="match status" value="1"/>
</dbReference>
<dbReference type="PANTHER" id="PTHR30586">
    <property type="entry name" value="ELECTRON TRANSPORT COMPLEX PROTEIN RNFE"/>
    <property type="match status" value="1"/>
</dbReference>
<dbReference type="PANTHER" id="PTHR30586:SF0">
    <property type="entry name" value="ION-TRANSLOCATING OXIDOREDUCTASE COMPLEX SUBUNIT E"/>
    <property type="match status" value="1"/>
</dbReference>
<dbReference type="Pfam" id="PF02508">
    <property type="entry name" value="Rnf-Nqr"/>
    <property type="match status" value="1"/>
</dbReference>
<dbReference type="PIRSF" id="PIRSF006102">
    <property type="entry name" value="NQR_DE"/>
    <property type="match status" value="1"/>
</dbReference>
<evidence type="ECO:0000255" key="1">
    <source>
        <dbReference type="HAMAP-Rule" id="MF_00478"/>
    </source>
</evidence>